<name>MET23_MOUSE</name>
<organism>
    <name type="scientific">Mus musculus</name>
    <name type="common">Mouse</name>
    <dbReference type="NCBI Taxonomy" id="10090"/>
    <lineage>
        <taxon>Eukaryota</taxon>
        <taxon>Metazoa</taxon>
        <taxon>Chordata</taxon>
        <taxon>Craniata</taxon>
        <taxon>Vertebrata</taxon>
        <taxon>Euteleostomi</taxon>
        <taxon>Mammalia</taxon>
        <taxon>Eutheria</taxon>
        <taxon>Euarchontoglires</taxon>
        <taxon>Glires</taxon>
        <taxon>Rodentia</taxon>
        <taxon>Myomorpha</taxon>
        <taxon>Muroidea</taxon>
        <taxon>Muridae</taxon>
        <taxon>Murinae</taxon>
        <taxon>Mus</taxon>
        <taxon>Mus</taxon>
    </lineage>
</organism>
<accession>A2AA28</accession>
<accession>Q8R2Z2</accession>
<accession>Q9D1J5</accession>
<sequence length="253" mass="28289">MDSVRPRAPWAPPPDPASLDSPTCEPGLMAGTQLFRFREEPVPGGNRAVLEVRVPQVLHVQYGMYVWPCAVVLAQYLWFHRRSLPGKAVLEVGAGVSLPGILAAKCGAKVILSDSSEFPHCLDICRQSCQMNNLPQVEVVGLTWGHISKDILSLPPQDIILGSDVFFEPEDFESILATVYFLMQKNPKVQFWSTYQVRSADWSLEGLLYKWDMKCVHIPLESFDADKEDIAESTLPGRHTVEMLIISFAKDSF</sequence>
<gene>
    <name evidence="4 6" type="primary">Mettl23</name>
</gene>
<comment type="function">
    <text evidence="3">Histone methyltransferase that dimethylates histone H3 at 'Arg-17', forming asymmetric dimethylarginine (H3R17me2a), leading to activate transcription via chromatin remodeling (PubMed:28930672). Maternal factor involved in epigenetic chromatin reprogramming of the paternal genome in the zygote: mediates H3R17me2a, promoting histone H3.3 incorporation in the male pronucleus, leading to TET3 recruitment and subsequent DNA demethylation (PubMed:28930672).</text>
</comment>
<comment type="catalytic activity">
    <reaction evidence="3">
        <text>L-arginyl-[protein] + 2 S-adenosyl-L-methionine = N(omega),N(omega)-dimethyl-L-arginyl-[protein] + 2 S-adenosyl-L-homocysteine + 2 H(+)</text>
        <dbReference type="Rhea" id="RHEA:48096"/>
        <dbReference type="Rhea" id="RHEA-COMP:10532"/>
        <dbReference type="Rhea" id="RHEA-COMP:11991"/>
        <dbReference type="ChEBI" id="CHEBI:15378"/>
        <dbReference type="ChEBI" id="CHEBI:29965"/>
        <dbReference type="ChEBI" id="CHEBI:57856"/>
        <dbReference type="ChEBI" id="CHEBI:59789"/>
        <dbReference type="ChEBI" id="CHEBI:61897"/>
        <dbReference type="EC" id="2.1.1.319"/>
    </reaction>
    <physiologicalReaction direction="left-to-right" evidence="3">
        <dbReference type="Rhea" id="RHEA:48097"/>
    </physiologicalReaction>
</comment>
<comment type="subunit">
    <text evidence="1 3">Interacts with HSPA5, HSP90B1, TUBULIN, UGGT1 and UGGT2 (By similarity). Interacts with TET3 (PubMed:28930672). Interacts with STPG4 (PubMed:28930672).</text>
</comment>
<comment type="subcellular location">
    <subcellularLocation>
        <location evidence="3">Nucleus</location>
    </subcellularLocation>
    <subcellularLocation>
        <location evidence="3">Cytoplasm</location>
    </subcellularLocation>
    <text evidence="3">Localizes in male and female zygote pronucleus and cytoplasm.</text>
</comment>
<comment type="tissue specificity">
    <text evidence="3">Ubiquitously expressed.</text>
</comment>
<comment type="disruption phenotype">
    <text evidence="3">Mice give birth to significantly smaller litter sizes (PubMed:28930672). Moreover, about a third of the homozygous newborn mice die before weaning and only a few survive to adulthood (PubMed:28930672). Strongly reduced 5-hydroxymethylcytosine (5hmC) levels in zygotes (PubMed:28930672).</text>
</comment>
<comment type="similarity">
    <text evidence="5">Belongs to the methyltransferase superfamily. METTL23 family.</text>
</comment>
<comment type="sequence caution" evidence="5">
    <conflict type="erroneous initiation">
        <sequence resource="EMBL-CDS" id="AAH26936"/>
    </conflict>
    <text>Truncated N-terminus.</text>
</comment>
<comment type="sequence caution" evidence="5">
    <conflict type="erroneous initiation">
        <sequence resource="EMBL-CDS" id="BAB22797"/>
    </conflict>
    <text>Truncated N-terminus.</text>
</comment>
<protein>
    <recommendedName>
        <fullName evidence="5">Histone-arginine methyltransferase METTL23</fullName>
        <ecNumber evidence="3">2.1.1.319</ecNumber>
    </recommendedName>
    <alternativeName>
        <fullName evidence="5">Methyltransferase-like protein 23</fullName>
    </alternativeName>
</protein>
<keyword id="KW-0156">Chromatin regulator</keyword>
<keyword id="KW-0963">Cytoplasm</keyword>
<keyword id="KW-0217">Developmental protein</keyword>
<keyword id="KW-0489">Methyltransferase</keyword>
<keyword id="KW-0539">Nucleus</keyword>
<keyword id="KW-1185">Reference proteome</keyword>
<keyword id="KW-0949">S-adenosyl-L-methionine</keyword>
<keyword id="KW-0808">Transferase</keyword>
<dbReference type="EC" id="2.1.1.319" evidence="3"/>
<dbReference type="EMBL" id="AL645542">
    <property type="status" value="NOT_ANNOTATED_CDS"/>
    <property type="molecule type" value="Genomic_DNA"/>
</dbReference>
<dbReference type="EMBL" id="BC026936">
    <property type="protein sequence ID" value="AAH26936.1"/>
    <property type="status" value="ALT_INIT"/>
    <property type="molecule type" value="mRNA"/>
</dbReference>
<dbReference type="EMBL" id="AK003450">
    <property type="protein sequence ID" value="BAB22797.1"/>
    <property type="status" value="ALT_INIT"/>
    <property type="molecule type" value="mRNA"/>
</dbReference>
<dbReference type="CCDS" id="CCDS25679.2"/>
<dbReference type="RefSeq" id="NP_083141.3">
    <property type="nucleotide sequence ID" value="NM_028865.3"/>
</dbReference>
<dbReference type="SMR" id="A2AA28"/>
<dbReference type="FunCoup" id="A2AA28">
    <property type="interactions" value="2730"/>
</dbReference>
<dbReference type="STRING" id="10090.ENSMUSP00000101978"/>
<dbReference type="PhosphoSitePlus" id="A2AA28"/>
<dbReference type="PaxDb" id="10090-ENSMUSP00000101978"/>
<dbReference type="ProteomicsDB" id="252540"/>
<dbReference type="Antibodypedia" id="9811">
    <property type="antibodies" value="10 antibodies from 8 providers"/>
</dbReference>
<dbReference type="DNASU" id="74319"/>
<dbReference type="Ensembl" id="ENSMUST00000106370.10">
    <property type="protein sequence ID" value="ENSMUSP00000101978.4"/>
    <property type="gene ID" value="ENSMUSG00000090266.11"/>
</dbReference>
<dbReference type="GeneID" id="74319"/>
<dbReference type="KEGG" id="mmu:74319"/>
<dbReference type="UCSC" id="uc007mml.2">
    <property type="organism name" value="mouse"/>
</dbReference>
<dbReference type="AGR" id="MGI:1921569"/>
<dbReference type="CTD" id="124512"/>
<dbReference type="MGI" id="MGI:1921569">
    <property type="gene designation" value="Mettl23"/>
</dbReference>
<dbReference type="VEuPathDB" id="HostDB:ENSMUSG00000090266"/>
<dbReference type="eggNOG" id="KOG2793">
    <property type="taxonomic scope" value="Eukaryota"/>
</dbReference>
<dbReference type="GeneTree" id="ENSGT00510000048008"/>
<dbReference type="HOGENOM" id="CLU_082022_1_0_1"/>
<dbReference type="InParanoid" id="A2AA28"/>
<dbReference type="OMA" id="VIGITWG"/>
<dbReference type="OrthoDB" id="10815at9989"/>
<dbReference type="PhylomeDB" id="A2AA28"/>
<dbReference type="TreeFam" id="TF352729"/>
<dbReference type="BioGRID-ORCS" id="74319">
    <property type="hits" value="3 hits in 76 CRISPR screens"/>
</dbReference>
<dbReference type="PRO" id="PR:A2AA28"/>
<dbReference type="Proteomes" id="UP000000589">
    <property type="component" value="Chromosome 11"/>
</dbReference>
<dbReference type="RNAct" id="A2AA28">
    <property type="molecule type" value="protein"/>
</dbReference>
<dbReference type="Bgee" id="ENSMUSG00000090266">
    <property type="expression patterns" value="Expressed in heart left ventricle and 77 other cell types or tissues"/>
</dbReference>
<dbReference type="ExpressionAtlas" id="A2AA28">
    <property type="expression patterns" value="baseline and differential"/>
</dbReference>
<dbReference type="GO" id="GO:0005737">
    <property type="term" value="C:cytoplasm"/>
    <property type="evidence" value="ECO:0000314"/>
    <property type="project" value="UniProtKB"/>
</dbReference>
<dbReference type="GO" id="GO:0001939">
    <property type="term" value="C:female pronucleus"/>
    <property type="evidence" value="ECO:0000314"/>
    <property type="project" value="UniProtKB"/>
</dbReference>
<dbReference type="GO" id="GO:0001940">
    <property type="term" value="C:male pronucleus"/>
    <property type="evidence" value="ECO:0000314"/>
    <property type="project" value="UniProtKB"/>
</dbReference>
<dbReference type="GO" id="GO:0005654">
    <property type="term" value="C:nucleoplasm"/>
    <property type="evidence" value="ECO:0000304"/>
    <property type="project" value="Reactome"/>
</dbReference>
<dbReference type="GO" id="GO:0032991">
    <property type="term" value="C:protein-containing complex"/>
    <property type="evidence" value="ECO:0007669"/>
    <property type="project" value="Ensembl"/>
</dbReference>
<dbReference type="GO" id="GO:0140297">
    <property type="term" value="F:DNA-binding transcription factor binding"/>
    <property type="evidence" value="ECO:0007669"/>
    <property type="project" value="Ensembl"/>
</dbReference>
<dbReference type="GO" id="GO:0031072">
    <property type="term" value="F:heat shock protein binding"/>
    <property type="evidence" value="ECO:0007669"/>
    <property type="project" value="Ensembl"/>
</dbReference>
<dbReference type="GO" id="GO:0035642">
    <property type="term" value="F:histone H3R17 methyltransferase activity"/>
    <property type="evidence" value="ECO:0000314"/>
    <property type="project" value="UniProtKB"/>
</dbReference>
<dbReference type="GO" id="GO:0042054">
    <property type="term" value="F:histone methyltransferase activity"/>
    <property type="evidence" value="ECO:0000304"/>
    <property type="project" value="Reactome"/>
</dbReference>
<dbReference type="GO" id="GO:0035242">
    <property type="term" value="F:protein-arginine omega-N asymmetric methyltransferase activity"/>
    <property type="evidence" value="ECO:0007669"/>
    <property type="project" value="RHEA"/>
</dbReference>
<dbReference type="GO" id="GO:0050890">
    <property type="term" value="P:cognition"/>
    <property type="evidence" value="ECO:0007669"/>
    <property type="project" value="Ensembl"/>
</dbReference>
<dbReference type="GO" id="GO:0044727">
    <property type="term" value="P:epigenetic programing of male pronucleus"/>
    <property type="evidence" value="ECO:0000315"/>
    <property type="project" value="UniProtKB"/>
</dbReference>
<dbReference type="GO" id="GO:0044725">
    <property type="term" value="P:epigenetic programming in the zygotic pronuclei"/>
    <property type="evidence" value="ECO:0000315"/>
    <property type="project" value="UniProtKB"/>
</dbReference>
<dbReference type="GO" id="GO:0032259">
    <property type="term" value="P:methylation"/>
    <property type="evidence" value="ECO:0007669"/>
    <property type="project" value="UniProtKB-KW"/>
</dbReference>
<dbReference type="GO" id="GO:0045944">
    <property type="term" value="P:positive regulation of transcription by RNA polymerase II"/>
    <property type="evidence" value="ECO:0007669"/>
    <property type="project" value="Ensembl"/>
</dbReference>
<dbReference type="FunFam" id="3.40.50.150:FF:000173">
    <property type="entry name" value="methyltransferase-like protein 23 isoform X1"/>
    <property type="match status" value="1"/>
</dbReference>
<dbReference type="Gene3D" id="3.40.50.150">
    <property type="entry name" value="Vaccinia Virus protein VP39"/>
    <property type="match status" value="1"/>
</dbReference>
<dbReference type="InterPro" id="IPR019410">
    <property type="entry name" value="Methyltransf_16"/>
</dbReference>
<dbReference type="InterPro" id="IPR029063">
    <property type="entry name" value="SAM-dependent_MTases_sf"/>
</dbReference>
<dbReference type="PANTHER" id="PTHR14614">
    <property type="entry name" value="HEPATOCELLULAR CARCINOMA-ASSOCIATED ANTIGEN"/>
    <property type="match status" value="1"/>
</dbReference>
<dbReference type="PANTHER" id="PTHR14614:SF164">
    <property type="entry name" value="HISTONE-ARGININE METHYLTRANSFERASE METTL23"/>
    <property type="match status" value="1"/>
</dbReference>
<dbReference type="Pfam" id="PF10294">
    <property type="entry name" value="Methyltransf_16"/>
    <property type="match status" value="1"/>
</dbReference>
<dbReference type="SUPFAM" id="SSF53335">
    <property type="entry name" value="S-adenosyl-L-methionine-dependent methyltransferases"/>
    <property type="match status" value="1"/>
</dbReference>
<evidence type="ECO:0000250" key="1">
    <source>
        <dbReference type="UniProtKB" id="Q86XA0"/>
    </source>
</evidence>
<evidence type="ECO:0000256" key="2">
    <source>
        <dbReference type="SAM" id="MobiDB-lite"/>
    </source>
</evidence>
<evidence type="ECO:0000269" key="3">
    <source>
    </source>
</evidence>
<evidence type="ECO:0000303" key="4">
    <source>
    </source>
</evidence>
<evidence type="ECO:0000305" key="5"/>
<evidence type="ECO:0000312" key="6">
    <source>
        <dbReference type="MGI" id="MGI:1921569"/>
    </source>
</evidence>
<reference key="1">
    <citation type="journal article" date="2009" name="PLoS Biol.">
        <title>Lineage-specific biology revealed by a finished genome assembly of the mouse.</title>
        <authorList>
            <person name="Church D.M."/>
            <person name="Goodstadt L."/>
            <person name="Hillier L.W."/>
            <person name="Zody M.C."/>
            <person name="Goldstein S."/>
            <person name="She X."/>
            <person name="Bult C.J."/>
            <person name="Agarwala R."/>
            <person name="Cherry J.L."/>
            <person name="DiCuccio M."/>
            <person name="Hlavina W."/>
            <person name="Kapustin Y."/>
            <person name="Meric P."/>
            <person name="Maglott D."/>
            <person name="Birtle Z."/>
            <person name="Marques A.C."/>
            <person name="Graves T."/>
            <person name="Zhou S."/>
            <person name="Teague B."/>
            <person name="Potamousis K."/>
            <person name="Churas C."/>
            <person name="Place M."/>
            <person name="Herschleb J."/>
            <person name="Runnheim R."/>
            <person name="Forrest D."/>
            <person name="Amos-Landgraf J."/>
            <person name="Schwartz D.C."/>
            <person name="Cheng Z."/>
            <person name="Lindblad-Toh K."/>
            <person name="Eichler E.E."/>
            <person name="Ponting C.P."/>
        </authorList>
    </citation>
    <scope>NUCLEOTIDE SEQUENCE [LARGE SCALE GENOMIC DNA]</scope>
    <source>
        <strain>C57BL/6J</strain>
    </source>
</reference>
<reference key="2">
    <citation type="journal article" date="2004" name="Genome Res.">
        <title>The status, quality, and expansion of the NIH full-length cDNA project: the Mammalian Gene Collection (MGC).</title>
        <authorList>
            <consortium name="The MGC Project Team"/>
        </authorList>
    </citation>
    <scope>NUCLEOTIDE SEQUENCE [LARGE SCALE MRNA]</scope>
    <source>
        <strain>Czech II</strain>
        <tissue>Mammary tumor</tissue>
    </source>
</reference>
<reference key="3">
    <citation type="journal article" date="2005" name="Science">
        <title>The transcriptional landscape of the mammalian genome.</title>
        <authorList>
            <person name="Carninci P."/>
            <person name="Kasukawa T."/>
            <person name="Katayama S."/>
            <person name="Gough J."/>
            <person name="Frith M.C."/>
            <person name="Maeda N."/>
            <person name="Oyama R."/>
            <person name="Ravasi T."/>
            <person name="Lenhard B."/>
            <person name="Wells C."/>
            <person name="Kodzius R."/>
            <person name="Shimokawa K."/>
            <person name="Bajic V.B."/>
            <person name="Brenner S.E."/>
            <person name="Batalov S."/>
            <person name="Forrest A.R."/>
            <person name="Zavolan M."/>
            <person name="Davis M.J."/>
            <person name="Wilming L.G."/>
            <person name="Aidinis V."/>
            <person name="Allen J.E."/>
            <person name="Ambesi-Impiombato A."/>
            <person name="Apweiler R."/>
            <person name="Aturaliya R.N."/>
            <person name="Bailey T.L."/>
            <person name="Bansal M."/>
            <person name="Baxter L."/>
            <person name="Beisel K.W."/>
            <person name="Bersano T."/>
            <person name="Bono H."/>
            <person name="Chalk A.M."/>
            <person name="Chiu K.P."/>
            <person name="Choudhary V."/>
            <person name="Christoffels A."/>
            <person name="Clutterbuck D.R."/>
            <person name="Crowe M.L."/>
            <person name="Dalla E."/>
            <person name="Dalrymple B.P."/>
            <person name="de Bono B."/>
            <person name="Della Gatta G."/>
            <person name="di Bernardo D."/>
            <person name="Down T."/>
            <person name="Engstrom P."/>
            <person name="Fagiolini M."/>
            <person name="Faulkner G."/>
            <person name="Fletcher C.F."/>
            <person name="Fukushima T."/>
            <person name="Furuno M."/>
            <person name="Futaki S."/>
            <person name="Gariboldi M."/>
            <person name="Georgii-Hemming P."/>
            <person name="Gingeras T.R."/>
            <person name="Gojobori T."/>
            <person name="Green R.E."/>
            <person name="Gustincich S."/>
            <person name="Harbers M."/>
            <person name="Hayashi Y."/>
            <person name="Hensch T.K."/>
            <person name="Hirokawa N."/>
            <person name="Hill D."/>
            <person name="Huminiecki L."/>
            <person name="Iacono M."/>
            <person name="Ikeo K."/>
            <person name="Iwama A."/>
            <person name="Ishikawa T."/>
            <person name="Jakt M."/>
            <person name="Kanapin A."/>
            <person name="Katoh M."/>
            <person name="Kawasawa Y."/>
            <person name="Kelso J."/>
            <person name="Kitamura H."/>
            <person name="Kitano H."/>
            <person name="Kollias G."/>
            <person name="Krishnan S.P."/>
            <person name="Kruger A."/>
            <person name="Kummerfeld S.K."/>
            <person name="Kurochkin I.V."/>
            <person name="Lareau L.F."/>
            <person name="Lazarevic D."/>
            <person name="Lipovich L."/>
            <person name="Liu J."/>
            <person name="Liuni S."/>
            <person name="McWilliam S."/>
            <person name="Madan Babu M."/>
            <person name="Madera M."/>
            <person name="Marchionni L."/>
            <person name="Matsuda H."/>
            <person name="Matsuzawa S."/>
            <person name="Miki H."/>
            <person name="Mignone F."/>
            <person name="Miyake S."/>
            <person name="Morris K."/>
            <person name="Mottagui-Tabar S."/>
            <person name="Mulder N."/>
            <person name="Nakano N."/>
            <person name="Nakauchi H."/>
            <person name="Ng P."/>
            <person name="Nilsson R."/>
            <person name="Nishiguchi S."/>
            <person name="Nishikawa S."/>
            <person name="Nori F."/>
            <person name="Ohara O."/>
            <person name="Okazaki Y."/>
            <person name="Orlando V."/>
            <person name="Pang K.C."/>
            <person name="Pavan W.J."/>
            <person name="Pavesi G."/>
            <person name="Pesole G."/>
            <person name="Petrovsky N."/>
            <person name="Piazza S."/>
            <person name="Reed J."/>
            <person name="Reid J.F."/>
            <person name="Ring B.Z."/>
            <person name="Ringwald M."/>
            <person name="Rost B."/>
            <person name="Ruan Y."/>
            <person name="Salzberg S.L."/>
            <person name="Sandelin A."/>
            <person name="Schneider C."/>
            <person name="Schoenbach C."/>
            <person name="Sekiguchi K."/>
            <person name="Semple C.A."/>
            <person name="Seno S."/>
            <person name="Sessa L."/>
            <person name="Sheng Y."/>
            <person name="Shibata Y."/>
            <person name="Shimada H."/>
            <person name="Shimada K."/>
            <person name="Silva D."/>
            <person name="Sinclair B."/>
            <person name="Sperling S."/>
            <person name="Stupka E."/>
            <person name="Sugiura K."/>
            <person name="Sultana R."/>
            <person name="Takenaka Y."/>
            <person name="Taki K."/>
            <person name="Tammoja K."/>
            <person name="Tan S.L."/>
            <person name="Tang S."/>
            <person name="Taylor M.S."/>
            <person name="Tegner J."/>
            <person name="Teichmann S.A."/>
            <person name="Ueda H.R."/>
            <person name="van Nimwegen E."/>
            <person name="Verardo R."/>
            <person name="Wei C.L."/>
            <person name="Yagi K."/>
            <person name="Yamanishi H."/>
            <person name="Zabarovsky E."/>
            <person name="Zhu S."/>
            <person name="Zimmer A."/>
            <person name="Hide W."/>
            <person name="Bult C."/>
            <person name="Grimmond S.M."/>
            <person name="Teasdale R.D."/>
            <person name="Liu E.T."/>
            <person name="Brusic V."/>
            <person name="Quackenbush J."/>
            <person name="Wahlestedt C."/>
            <person name="Mattick J.S."/>
            <person name="Hume D.A."/>
            <person name="Kai C."/>
            <person name="Sasaki D."/>
            <person name="Tomaru Y."/>
            <person name="Fukuda S."/>
            <person name="Kanamori-Katayama M."/>
            <person name="Suzuki M."/>
            <person name="Aoki J."/>
            <person name="Arakawa T."/>
            <person name="Iida J."/>
            <person name="Imamura K."/>
            <person name="Itoh M."/>
            <person name="Kato T."/>
            <person name="Kawaji H."/>
            <person name="Kawagashira N."/>
            <person name="Kawashima T."/>
            <person name="Kojima M."/>
            <person name="Kondo S."/>
            <person name="Konno H."/>
            <person name="Nakano K."/>
            <person name="Ninomiya N."/>
            <person name="Nishio T."/>
            <person name="Okada M."/>
            <person name="Plessy C."/>
            <person name="Shibata K."/>
            <person name="Shiraki T."/>
            <person name="Suzuki S."/>
            <person name="Tagami M."/>
            <person name="Waki K."/>
            <person name="Watahiki A."/>
            <person name="Okamura-Oho Y."/>
            <person name="Suzuki H."/>
            <person name="Kawai J."/>
            <person name="Hayashizaki Y."/>
        </authorList>
    </citation>
    <scope>NUCLEOTIDE SEQUENCE [LARGE SCALE MRNA] OF 22-253</scope>
    <source>
        <strain>C57BL/6J</strain>
    </source>
</reference>
<reference key="4">
    <citation type="journal article" date="2017" name="Cell Rep.">
        <title>Histone H3 methylated at arginine 17 is essential for reprogramming the paternal genome in zygotes.</title>
        <authorList>
            <person name="Hatanaka Y."/>
            <person name="Tsusaka T."/>
            <person name="Shimizu N."/>
            <person name="Morita K."/>
            <person name="Suzuki T."/>
            <person name="Machida S."/>
            <person name="Satoh M."/>
            <person name="Honda A."/>
            <person name="Hirose M."/>
            <person name="Kamimura S."/>
            <person name="Ogonuki N."/>
            <person name="Nakamura T."/>
            <person name="Inoue K."/>
            <person name="Hosoi Y."/>
            <person name="Dohmae N."/>
            <person name="Nakano T."/>
            <person name="Kurumizaka H."/>
            <person name="Matsumoto K."/>
            <person name="Shinkai Y."/>
            <person name="Ogura A."/>
        </authorList>
    </citation>
    <scope>FUNCTION</scope>
    <scope>CATALYTIC ACTIVITY</scope>
    <scope>SUBCELLULAR LOCATION</scope>
    <scope>DISRUPTION PHENOTYPE</scope>
    <scope>TISSUE SPECIFICITY</scope>
    <scope>INTERACTION WITH TET3 AND STPG4</scope>
</reference>
<proteinExistence type="evidence at protein level"/>
<feature type="chain" id="PRO_0000321521" description="Histone-arginine methyltransferase METTL23">
    <location>
        <begin position="1"/>
        <end position="253"/>
    </location>
</feature>
<feature type="region of interest" description="Disordered" evidence="2">
    <location>
        <begin position="1"/>
        <end position="23"/>
    </location>
</feature>
<feature type="sequence conflict" description="In Ref. 2; AAH26936." evidence="5" ref="2">
    <original>V</original>
    <variation>G</variation>
    <location>
        <position position="42"/>
    </location>
</feature>